<keyword id="KW-0963">Cytoplasm</keyword>
<keyword id="KW-0441">Lipid A biosynthesis</keyword>
<keyword id="KW-0444">Lipid biosynthesis</keyword>
<keyword id="KW-0443">Lipid metabolism</keyword>
<keyword id="KW-0456">Lyase</keyword>
<keyword id="KW-1185">Reference proteome</keyword>
<name>FABZ_XYLFT</name>
<feature type="chain" id="PRO_0000091766" description="3-hydroxyacyl-[acyl-carrier-protein] dehydratase FabZ">
    <location>
        <begin position="1"/>
        <end position="160"/>
    </location>
</feature>
<feature type="active site" evidence="1">
    <location>
        <position position="63"/>
    </location>
</feature>
<accession>Q87EI3</accession>
<sequence>MSDSPTTAHTRLELPIDIIRIQALLPHRYPFLLVDRILELDQKQKRIVAQKNVSINEPFFQGHFPEHPVMPGVLIIEALAQAGGVMTQLNLSHNGHSSLLFYMVRVDNARFNKQVVPGDILILDMTMKRRIRNMGCYYGEARVNGEVVACADIMCAGVKS</sequence>
<organism>
    <name type="scientific">Xylella fastidiosa (strain Temecula1 / ATCC 700964)</name>
    <dbReference type="NCBI Taxonomy" id="183190"/>
    <lineage>
        <taxon>Bacteria</taxon>
        <taxon>Pseudomonadati</taxon>
        <taxon>Pseudomonadota</taxon>
        <taxon>Gammaproteobacteria</taxon>
        <taxon>Lysobacterales</taxon>
        <taxon>Lysobacteraceae</taxon>
        <taxon>Xylella</taxon>
    </lineage>
</organism>
<comment type="function">
    <text evidence="1">Involved in unsaturated fatty acids biosynthesis. Catalyzes the dehydration of short chain beta-hydroxyacyl-ACPs and long chain saturated and unsaturated beta-hydroxyacyl-ACPs.</text>
</comment>
<comment type="catalytic activity">
    <reaction evidence="1">
        <text>a (3R)-hydroxyacyl-[ACP] = a (2E)-enoyl-[ACP] + H2O</text>
        <dbReference type="Rhea" id="RHEA:13097"/>
        <dbReference type="Rhea" id="RHEA-COMP:9925"/>
        <dbReference type="Rhea" id="RHEA-COMP:9945"/>
        <dbReference type="ChEBI" id="CHEBI:15377"/>
        <dbReference type="ChEBI" id="CHEBI:78784"/>
        <dbReference type="ChEBI" id="CHEBI:78827"/>
        <dbReference type="EC" id="4.2.1.59"/>
    </reaction>
</comment>
<comment type="subcellular location">
    <subcellularLocation>
        <location evidence="1">Cytoplasm</location>
    </subcellularLocation>
</comment>
<comment type="similarity">
    <text evidence="1">Belongs to the thioester dehydratase family. FabZ subfamily.</text>
</comment>
<evidence type="ECO:0000255" key="1">
    <source>
        <dbReference type="HAMAP-Rule" id="MF_00406"/>
    </source>
</evidence>
<gene>
    <name evidence="1" type="primary">fabZ</name>
    <name type="ordered locus">PD_0324</name>
</gene>
<dbReference type="EC" id="4.2.1.59" evidence="1"/>
<dbReference type="EMBL" id="AE009442">
    <property type="protein sequence ID" value="AAO28208.1"/>
    <property type="molecule type" value="Genomic_DNA"/>
</dbReference>
<dbReference type="RefSeq" id="WP_004089335.1">
    <property type="nucleotide sequence ID" value="NC_004556.1"/>
</dbReference>
<dbReference type="SMR" id="Q87EI3"/>
<dbReference type="GeneID" id="93904025"/>
<dbReference type="KEGG" id="xft:PD_0324"/>
<dbReference type="HOGENOM" id="CLU_078912_1_2_6"/>
<dbReference type="Proteomes" id="UP000002516">
    <property type="component" value="Chromosome"/>
</dbReference>
<dbReference type="GO" id="GO:0005737">
    <property type="term" value="C:cytoplasm"/>
    <property type="evidence" value="ECO:0007669"/>
    <property type="project" value="UniProtKB-SubCell"/>
</dbReference>
<dbReference type="GO" id="GO:0016020">
    <property type="term" value="C:membrane"/>
    <property type="evidence" value="ECO:0007669"/>
    <property type="project" value="GOC"/>
</dbReference>
<dbReference type="GO" id="GO:0019171">
    <property type="term" value="F:(3R)-hydroxyacyl-[acyl-carrier-protein] dehydratase activity"/>
    <property type="evidence" value="ECO:0007669"/>
    <property type="project" value="UniProtKB-EC"/>
</dbReference>
<dbReference type="GO" id="GO:0006633">
    <property type="term" value="P:fatty acid biosynthetic process"/>
    <property type="evidence" value="ECO:0007669"/>
    <property type="project" value="UniProtKB-UniRule"/>
</dbReference>
<dbReference type="GO" id="GO:0009245">
    <property type="term" value="P:lipid A biosynthetic process"/>
    <property type="evidence" value="ECO:0007669"/>
    <property type="project" value="UniProtKB-UniRule"/>
</dbReference>
<dbReference type="CDD" id="cd01288">
    <property type="entry name" value="FabZ"/>
    <property type="match status" value="1"/>
</dbReference>
<dbReference type="FunFam" id="3.10.129.10:FF:000001">
    <property type="entry name" value="3-hydroxyacyl-[acyl-carrier-protein] dehydratase FabZ"/>
    <property type="match status" value="1"/>
</dbReference>
<dbReference type="Gene3D" id="3.10.129.10">
    <property type="entry name" value="Hotdog Thioesterase"/>
    <property type="match status" value="1"/>
</dbReference>
<dbReference type="HAMAP" id="MF_00406">
    <property type="entry name" value="FabZ"/>
    <property type="match status" value="1"/>
</dbReference>
<dbReference type="InterPro" id="IPR013114">
    <property type="entry name" value="FabA_FabZ"/>
</dbReference>
<dbReference type="InterPro" id="IPR010084">
    <property type="entry name" value="FabZ"/>
</dbReference>
<dbReference type="InterPro" id="IPR029069">
    <property type="entry name" value="HotDog_dom_sf"/>
</dbReference>
<dbReference type="NCBIfam" id="TIGR01750">
    <property type="entry name" value="fabZ"/>
    <property type="match status" value="1"/>
</dbReference>
<dbReference type="NCBIfam" id="NF000582">
    <property type="entry name" value="PRK00006.1"/>
    <property type="match status" value="1"/>
</dbReference>
<dbReference type="PANTHER" id="PTHR30272">
    <property type="entry name" value="3-HYDROXYACYL-[ACYL-CARRIER-PROTEIN] DEHYDRATASE"/>
    <property type="match status" value="1"/>
</dbReference>
<dbReference type="PANTHER" id="PTHR30272:SF1">
    <property type="entry name" value="3-HYDROXYACYL-[ACYL-CARRIER-PROTEIN] DEHYDRATASE"/>
    <property type="match status" value="1"/>
</dbReference>
<dbReference type="Pfam" id="PF07977">
    <property type="entry name" value="FabA"/>
    <property type="match status" value="1"/>
</dbReference>
<dbReference type="SUPFAM" id="SSF54637">
    <property type="entry name" value="Thioesterase/thiol ester dehydrase-isomerase"/>
    <property type="match status" value="1"/>
</dbReference>
<proteinExistence type="inferred from homology"/>
<reference key="1">
    <citation type="journal article" date="2003" name="J. Bacteriol.">
        <title>Comparative analyses of the complete genome sequences of Pierce's disease and citrus variegated chlorosis strains of Xylella fastidiosa.</title>
        <authorList>
            <person name="Van Sluys M.A."/>
            <person name="de Oliveira M.C."/>
            <person name="Monteiro-Vitorello C.B."/>
            <person name="Miyaki C.Y."/>
            <person name="Furlan L.R."/>
            <person name="Camargo L.E.A."/>
            <person name="da Silva A.C.R."/>
            <person name="Moon D.H."/>
            <person name="Takita M.A."/>
            <person name="Lemos E.G.M."/>
            <person name="Machado M.A."/>
            <person name="Ferro M.I.T."/>
            <person name="da Silva F.R."/>
            <person name="Goldman M.H.S."/>
            <person name="Goldman G.H."/>
            <person name="Lemos M.V.F."/>
            <person name="El-Dorry H."/>
            <person name="Tsai S.M."/>
            <person name="Carrer H."/>
            <person name="Carraro D.M."/>
            <person name="de Oliveira R.C."/>
            <person name="Nunes L.R."/>
            <person name="Siqueira W.J."/>
            <person name="Coutinho L.L."/>
            <person name="Kimura E.T."/>
            <person name="Ferro E.S."/>
            <person name="Harakava R."/>
            <person name="Kuramae E.E."/>
            <person name="Marino C.L."/>
            <person name="Giglioti E."/>
            <person name="Abreu I.L."/>
            <person name="Alves L.M.C."/>
            <person name="do Amaral A.M."/>
            <person name="Baia G.S."/>
            <person name="Blanco S.R."/>
            <person name="Brito M.S."/>
            <person name="Cannavan F.S."/>
            <person name="Celestino A.V."/>
            <person name="da Cunha A.F."/>
            <person name="Fenille R.C."/>
            <person name="Ferro J.A."/>
            <person name="Formighieri E.F."/>
            <person name="Kishi L.T."/>
            <person name="Leoni S.G."/>
            <person name="Oliveira A.R."/>
            <person name="Rosa V.E. Jr."/>
            <person name="Sassaki F.T."/>
            <person name="Sena J.A.D."/>
            <person name="de Souza A.A."/>
            <person name="Truffi D."/>
            <person name="Tsukumo F."/>
            <person name="Yanai G.M."/>
            <person name="Zaros L.G."/>
            <person name="Civerolo E.L."/>
            <person name="Simpson A.J.G."/>
            <person name="Almeida N.F. Jr."/>
            <person name="Setubal J.C."/>
            <person name="Kitajima J.P."/>
        </authorList>
    </citation>
    <scope>NUCLEOTIDE SEQUENCE [LARGE SCALE GENOMIC DNA]</scope>
    <source>
        <strain>Temecula1 / ATCC 700964</strain>
    </source>
</reference>
<protein>
    <recommendedName>
        <fullName evidence="1">3-hydroxyacyl-[acyl-carrier-protein] dehydratase FabZ</fullName>
        <ecNumber evidence="1">4.2.1.59</ecNumber>
    </recommendedName>
    <alternativeName>
        <fullName evidence="1">(3R)-hydroxymyristoyl-[acyl-carrier-protein] dehydratase</fullName>
        <shortName evidence="1">(3R)-hydroxymyristoyl-ACP dehydrase</shortName>
    </alternativeName>
    <alternativeName>
        <fullName evidence="1">Beta-hydroxyacyl-ACP dehydratase</fullName>
    </alternativeName>
</protein>